<comment type="similarity">
    <text evidence="3">Belongs to the LTV1 family.</text>
</comment>
<organism>
    <name type="scientific">Dictyostelium discoideum</name>
    <name type="common">Social amoeba</name>
    <dbReference type="NCBI Taxonomy" id="44689"/>
    <lineage>
        <taxon>Eukaryota</taxon>
        <taxon>Amoebozoa</taxon>
        <taxon>Evosea</taxon>
        <taxon>Eumycetozoa</taxon>
        <taxon>Dictyostelia</taxon>
        <taxon>Dictyosteliales</taxon>
        <taxon>Dictyosteliaceae</taxon>
        <taxon>Dictyostelium</taxon>
    </lineage>
</organism>
<keyword id="KW-0175">Coiled coil</keyword>
<keyword id="KW-1185">Reference proteome</keyword>
<accession>Q8T1D4</accession>
<accession>Q553H7</accession>
<name>LTV1_DICDI</name>
<evidence type="ECO:0000255" key="1"/>
<evidence type="ECO:0000256" key="2">
    <source>
        <dbReference type="SAM" id="MobiDB-lite"/>
    </source>
</evidence>
<evidence type="ECO:0000305" key="3"/>
<feature type="chain" id="PRO_0000328462" description="Protein LTV1 homolog">
    <location>
        <begin position="1"/>
        <end position="496"/>
    </location>
</feature>
<feature type="region of interest" description="Disordered" evidence="2">
    <location>
        <begin position="28"/>
        <end position="66"/>
    </location>
</feature>
<feature type="region of interest" description="Disordered" evidence="2">
    <location>
        <begin position="217"/>
        <end position="236"/>
    </location>
</feature>
<feature type="region of interest" description="Disordered" evidence="2">
    <location>
        <begin position="400"/>
        <end position="462"/>
    </location>
</feature>
<feature type="coiled-coil region" evidence="1">
    <location>
        <begin position="439"/>
        <end position="474"/>
    </location>
</feature>
<feature type="compositionally biased region" description="Basic and acidic residues" evidence="2">
    <location>
        <begin position="28"/>
        <end position="37"/>
    </location>
</feature>
<feature type="compositionally biased region" description="Acidic residues" evidence="2">
    <location>
        <begin position="38"/>
        <end position="65"/>
    </location>
</feature>
<feature type="compositionally biased region" description="Acidic residues" evidence="2">
    <location>
        <begin position="417"/>
        <end position="430"/>
    </location>
</feature>
<feature type="compositionally biased region" description="Basic and acidic residues" evidence="2">
    <location>
        <begin position="453"/>
        <end position="462"/>
    </location>
</feature>
<sequence length="496" mass="57902">MPKPFIQNKNKQVLATFTASYRDRHGRETGVRDKVISEGEEDYSGEDNFSGEEEYEEYDSDDSEHDEYIQQESAKKEVDDLSTIGFKKDGFDYSKYMRPIGGGVFIPAIWDVNELKNKKNGIVELVKNSEPAPFMFGLEEISKDYKKDVKDLEVDEDIKEALVVDDEEDDFEELDDDFILQANGGTLDGLQDEVDETINKFNNFRIKNKAYDFIDDEEDYNGDGEYYEGEDDDDDYYEDDEEYYKNLKNKSGNNNNNKDDGRKVQDEVLEAQFEIALEQYEDEDIGELEPEETLGTCNVNNFEDVFDEFIDDYNKNHEPLMVQIQTLKKNNNFIALTEKEKEIILKRDWNKEVLVEVSDHENEENEDDKWDCETILTTYTNLENHPKLLREEKKIKLSRKTGMPIGVIPTKQKGDDGNSDNEEEDEEEDEKSVNLGVSRKNETKESKKLRKQQLKDDRKNKRELKKDLKVAFKKEEIKQTSIIKDQKTNSSVAVRY</sequence>
<proteinExistence type="inferred from homology"/>
<reference key="1">
    <citation type="journal article" date="2002" name="Nature">
        <title>Sequence and analysis of chromosome 2 of Dictyostelium discoideum.</title>
        <authorList>
            <person name="Gloeckner G."/>
            <person name="Eichinger L."/>
            <person name="Szafranski K."/>
            <person name="Pachebat J.A."/>
            <person name="Bankier A.T."/>
            <person name="Dear P.H."/>
            <person name="Lehmann R."/>
            <person name="Baumgart C."/>
            <person name="Parra G."/>
            <person name="Abril J.F."/>
            <person name="Guigo R."/>
            <person name="Kumpf K."/>
            <person name="Tunggal B."/>
            <person name="Cox E.C."/>
            <person name="Quail M.A."/>
            <person name="Platzer M."/>
            <person name="Rosenthal A."/>
            <person name="Noegel A.A."/>
        </authorList>
    </citation>
    <scope>NUCLEOTIDE SEQUENCE [LARGE SCALE GENOMIC DNA]</scope>
    <source>
        <strain>AX4</strain>
    </source>
</reference>
<reference key="2">
    <citation type="journal article" date="2005" name="Nature">
        <title>The genome of the social amoeba Dictyostelium discoideum.</title>
        <authorList>
            <person name="Eichinger L."/>
            <person name="Pachebat J.A."/>
            <person name="Gloeckner G."/>
            <person name="Rajandream M.A."/>
            <person name="Sucgang R."/>
            <person name="Berriman M."/>
            <person name="Song J."/>
            <person name="Olsen R."/>
            <person name="Szafranski K."/>
            <person name="Xu Q."/>
            <person name="Tunggal B."/>
            <person name="Kummerfeld S."/>
            <person name="Madera M."/>
            <person name="Konfortov B.A."/>
            <person name="Rivero F."/>
            <person name="Bankier A.T."/>
            <person name="Lehmann R."/>
            <person name="Hamlin N."/>
            <person name="Davies R."/>
            <person name="Gaudet P."/>
            <person name="Fey P."/>
            <person name="Pilcher K."/>
            <person name="Chen G."/>
            <person name="Saunders D."/>
            <person name="Sodergren E.J."/>
            <person name="Davis P."/>
            <person name="Kerhornou A."/>
            <person name="Nie X."/>
            <person name="Hall N."/>
            <person name="Anjard C."/>
            <person name="Hemphill L."/>
            <person name="Bason N."/>
            <person name="Farbrother P."/>
            <person name="Desany B."/>
            <person name="Just E."/>
            <person name="Morio T."/>
            <person name="Rost R."/>
            <person name="Churcher C.M."/>
            <person name="Cooper J."/>
            <person name="Haydock S."/>
            <person name="van Driessche N."/>
            <person name="Cronin A."/>
            <person name="Goodhead I."/>
            <person name="Muzny D.M."/>
            <person name="Mourier T."/>
            <person name="Pain A."/>
            <person name="Lu M."/>
            <person name="Harper D."/>
            <person name="Lindsay R."/>
            <person name="Hauser H."/>
            <person name="James K.D."/>
            <person name="Quiles M."/>
            <person name="Madan Babu M."/>
            <person name="Saito T."/>
            <person name="Buchrieser C."/>
            <person name="Wardroper A."/>
            <person name="Felder M."/>
            <person name="Thangavelu M."/>
            <person name="Johnson D."/>
            <person name="Knights A."/>
            <person name="Loulseged H."/>
            <person name="Mungall K.L."/>
            <person name="Oliver K."/>
            <person name="Price C."/>
            <person name="Quail M.A."/>
            <person name="Urushihara H."/>
            <person name="Hernandez J."/>
            <person name="Rabbinowitsch E."/>
            <person name="Steffen D."/>
            <person name="Sanders M."/>
            <person name="Ma J."/>
            <person name="Kohara Y."/>
            <person name="Sharp S."/>
            <person name="Simmonds M.N."/>
            <person name="Spiegler S."/>
            <person name="Tivey A."/>
            <person name="Sugano S."/>
            <person name="White B."/>
            <person name="Walker D."/>
            <person name="Woodward J.R."/>
            <person name="Winckler T."/>
            <person name="Tanaka Y."/>
            <person name="Shaulsky G."/>
            <person name="Schleicher M."/>
            <person name="Weinstock G.M."/>
            <person name="Rosenthal A."/>
            <person name="Cox E.C."/>
            <person name="Chisholm R.L."/>
            <person name="Gibbs R.A."/>
            <person name="Loomis W.F."/>
            <person name="Platzer M."/>
            <person name="Kay R.R."/>
            <person name="Williams J.G."/>
            <person name="Dear P.H."/>
            <person name="Noegel A.A."/>
            <person name="Barrell B.G."/>
            <person name="Kuspa A."/>
        </authorList>
    </citation>
    <scope>NUCLEOTIDE SEQUENCE [LARGE SCALE GENOMIC DNA]</scope>
    <source>
        <strain>AX4</strain>
    </source>
</reference>
<protein>
    <recommendedName>
        <fullName>Protein LTV1 homolog</fullName>
    </recommendedName>
</protein>
<gene>
    <name type="primary">ltv1</name>
    <name type="ORF">DDB_G0275601</name>
</gene>
<dbReference type="EMBL" id="AAFI02000013">
    <property type="protein sequence ID" value="EAL69551.1"/>
    <property type="molecule type" value="Genomic_DNA"/>
</dbReference>
<dbReference type="RefSeq" id="XP_643436.1">
    <property type="nucleotide sequence ID" value="XM_638344.1"/>
</dbReference>
<dbReference type="FunCoup" id="Q8T1D4">
    <property type="interactions" value="135"/>
</dbReference>
<dbReference type="STRING" id="44689.Q8T1D4"/>
<dbReference type="PaxDb" id="44689-DDB0302404"/>
<dbReference type="EnsemblProtists" id="EAL69551">
    <property type="protein sequence ID" value="EAL69551"/>
    <property type="gene ID" value="DDB_G0275601"/>
</dbReference>
<dbReference type="GeneID" id="8620021"/>
<dbReference type="KEGG" id="ddi:DDB_G0275601"/>
<dbReference type="dictyBase" id="DDB_G0275601">
    <property type="gene designation" value="ltv1"/>
</dbReference>
<dbReference type="VEuPathDB" id="AmoebaDB:DDB_G0275601"/>
<dbReference type="eggNOG" id="KOG2637">
    <property type="taxonomic scope" value="Eukaryota"/>
</dbReference>
<dbReference type="HOGENOM" id="CLU_029233_0_0_1"/>
<dbReference type="InParanoid" id="Q8T1D4"/>
<dbReference type="OMA" id="TKEFLFM"/>
<dbReference type="PRO" id="PR:Q8T1D4"/>
<dbReference type="Proteomes" id="UP000002195">
    <property type="component" value="Chromosome 2"/>
</dbReference>
<dbReference type="GO" id="GO:0005829">
    <property type="term" value="C:cytosol"/>
    <property type="evidence" value="ECO:0000318"/>
    <property type="project" value="GO_Central"/>
</dbReference>
<dbReference type="GO" id="GO:0005634">
    <property type="term" value="C:nucleus"/>
    <property type="evidence" value="ECO:0000318"/>
    <property type="project" value="GO_Central"/>
</dbReference>
<dbReference type="GO" id="GO:0030688">
    <property type="term" value="C:preribosome, small subunit precursor"/>
    <property type="evidence" value="ECO:0000318"/>
    <property type="project" value="GO_Central"/>
</dbReference>
<dbReference type="GO" id="GO:0042274">
    <property type="term" value="P:ribosomal small subunit biogenesis"/>
    <property type="evidence" value="ECO:0000318"/>
    <property type="project" value="GO_Central"/>
</dbReference>
<dbReference type="GO" id="GO:0000056">
    <property type="term" value="P:ribosomal small subunit export from nucleus"/>
    <property type="evidence" value="ECO:0000318"/>
    <property type="project" value="GO_Central"/>
</dbReference>
<dbReference type="InterPro" id="IPR007307">
    <property type="entry name" value="Ltv1"/>
</dbReference>
<dbReference type="PANTHER" id="PTHR21531">
    <property type="entry name" value="LOW-TEMPERATURE VIABILITY PROTEIN LTV1-RELATED"/>
    <property type="match status" value="1"/>
</dbReference>
<dbReference type="PANTHER" id="PTHR21531:SF0">
    <property type="entry name" value="PROTEIN LTV1 HOMOLOG"/>
    <property type="match status" value="1"/>
</dbReference>